<comment type="catalytic activity">
    <reaction>
        <text>Release of a C-terminal amino acid, but little or no action with -Asp, -Glu, -Arg, -Lys or -Pro.</text>
        <dbReference type="EC" id="3.4.17.1"/>
    </reaction>
</comment>
<comment type="cofactor">
    <cofactor evidence="2">
        <name>Zn(2+)</name>
        <dbReference type="ChEBI" id="CHEBI:29105"/>
    </cofactor>
    <text evidence="2">Binds 1 zinc ion per subunit.</text>
</comment>
<comment type="subcellular location">
    <subcellularLocation>
        <location>Cytoplasmic vesicle</location>
        <location>Secretory vesicle</location>
    </subcellularLocation>
    <text>Secretory granules.</text>
</comment>
<comment type="similarity">
    <text evidence="4">Belongs to the peptidase M14 family.</text>
</comment>
<keyword id="KW-0121">Carboxypeptidase</keyword>
<keyword id="KW-0968">Cytoplasmic vesicle</keyword>
<keyword id="KW-1015">Disulfide bond</keyword>
<keyword id="KW-0378">Hydrolase</keyword>
<keyword id="KW-0479">Metal-binding</keyword>
<keyword id="KW-0482">Metalloprotease</keyword>
<keyword id="KW-0645">Protease</keyword>
<keyword id="KW-1185">Reference proteome</keyword>
<keyword id="KW-0732">Signal</keyword>
<keyword id="KW-0862">Zinc</keyword>
<keyword id="KW-0865">Zymogen</keyword>
<sequence>MRFFLLMAVIYTTLAIAPVHFDREKVFRVKLQNEKHASVLKNLTQSIELDFWYPDAIHDIAVNMTVDFRVSEKESQTIQSTLEQHKIHYEILIHDLQEEIEKQFDVKDEIAGRHSYAKYNDWDKIVSWTEKMLEKHPEMVSRIKIGSTVEDNPLYVLKIGKKDGERKAIFMDCGIHAREWISPAFCQWFVYQATKSYGKNKIMTKLLDRMNFYVLPVFNVDGYIWSWTQDRMWRKNRSRNQNSTCIGTDLNRNFDVSWDSSPNTNKPCLNVYRGPAPESEKETKAVTNFIRSHLNSIKAYITFHSYSQMLLIPYGYTFKLPPNHQDLLKVARIATDALSTRYETRYIYGPIASTIYKTSGSSLDWVYDLGIKHTFAFELRDKGKSGFLLPESRIKPTCKETMLSVKFIAKYILKNTS</sequence>
<evidence type="ECO:0000250" key="1"/>
<evidence type="ECO:0000250" key="2">
    <source>
        <dbReference type="UniProtKB" id="P00730"/>
    </source>
</evidence>
<evidence type="ECO:0000255" key="3">
    <source>
        <dbReference type="PROSITE-ProRule" id="PRU01379"/>
    </source>
</evidence>
<evidence type="ECO:0000305" key="4"/>
<reference key="1">
    <citation type="journal article" date="1989" name="J. Biol. Chem.">
        <title>Isolation and molecular cloning of mast cell carboxypeptidase A. A novel member of the carboxypeptidase gene family.</title>
        <authorList>
            <person name="Reynolds D.S."/>
            <person name="Stevens R.L."/>
            <person name="Gurley D.S."/>
            <person name="Lane W.S."/>
            <person name="Austen K.F."/>
            <person name="Serafin W.E."/>
        </authorList>
    </citation>
    <scope>NUCLEOTIDE SEQUENCE [MRNA]</scope>
</reference>
<proteinExistence type="evidence at transcript level"/>
<organism>
    <name type="scientific">Mus musculus</name>
    <name type="common">Mouse</name>
    <dbReference type="NCBI Taxonomy" id="10090"/>
    <lineage>
        <taxon>Eukaryota</taxon>
        <taxon>Metazoa</taxon>
        <taxon>Chordata</taxon>
        <taxon>Craniata</taxon>
        <taxon>Vertebrata</taxon>
        <taxon>Euteleostomi</taxon>
        <taxon>Mammalia</taxon>
        <taxon>Eutheria</taxon>
        <taxon>Euarchontoglires</taxon>
        <taxon>Glires</taxon>
        <taxon>Rodentia</taxon>
        <taxon>Myomorpha</taxon>
        <taxon>Muroidea</taxon>
        <taxon>Muridae</taxon>
        <taxon>Murinae</taxon>
        <taxon>Mus</taxon>
        <taxon>Mus</taxon>
    </lineage>
</organism>
<name>CBPA3_MOUSE</name>
<feature type="signal peptide">
    <location>
        <begin position="1"/>
        <end position="15"/>
    </location>
</feature>
<feature type="propeptide" id="PRO_0000004397" description="Activation peptide">
    <location>
        <begin position="16"/>
        <end position="109"/>
    </location>
</feature>
<feature type="chain" id="PRO_0000004398" description="Mast cell carboxypeptidase A">
    <location>
        <begin position="110"/>
        <end position="417"/>
    </location>
</feature>
<feature type="domain" description="Peptidase M14" evidence="3">
    <location>
        <begin position="118"/>
        <end position="412"/>
    </location>
</feature>
<feature type="active site" description="Proton donor/acceptor" evidence="3">
    <location>
        <position position="378"/>
    </location>
</feature>
<feature type="binding site" evidence="3">
    <location>
        <position position="176"/>
    </location>
    <ligand>
        <name>Zn(2+)</name>
        <dbReference type="ChEBI" id="CHEBI:29105"/>
        <note>catalytic</note>
    </ligand>
</feature>
<feature type="binding site" evidence="3">
    <location>
        <position position="179"/>
    </location>
    <ligand>
        <name>Zn(2+)</name>
        <dbReference type="ChEBI" id="CHEBI:29105"/>
        <note>catalytic</note>
    </ligand>
</feature>
<feature type="binding site" evidence="3">
    <location>
        <position position="304"/>
    </location>
    <ligand>
        <name>Zn(2+)</name>
        <dbReference type="ChEBI" id="CHEBI:29105"/>
        <note>catalytic</note>
    </ligand>
</feature>
<feature type="disulfide bond" evidence="1">
    <location>
        <begin position="173"/>
        <end position="186"/>
    </location>
</feature>
<feature type="disulfide bond" evidence="1">
    <location>
        <begin position="245"/>
        <end position="268"/>
    </location>
</feature>
<accession>P15089</accession>
<dbReference type="EC" id="3.4.17.1"/>
<dbReference type="EMBL" id="J05118">
    <property type="protein sequence ID" value="AAA37369.1"/>
    <property type="molecule type" value="mRNA"/>
</dbReference>
<dbReference type="CCDS" id="CCDS17262.1"/>
<dbReference type="PIR" id="A34487">
    <property type="entry name" value="A34487"/>
</dbReference>
<dbReference type="RefSeq" id="NP_031779.1">
    <property type="nucleotide sequence ID" value="NM_007753.2"/>
</dbReference>
<dbReference type="SMR" id="P15089"/>
<dbReference type="BioGRID" id="198852">
    <property type="interactions" value="1"/>
</dbReference>
<dbReference type="FunCoup" id="P15089">
    <property type="interactions" value="156"/>
</dbReference>
<dbReference type="STRING" id="10090.ENSMUSP00000001921"/>
<dbReference type="MEROPS" id="M14.010"/>
<dbReference type="GlyGen" id="P15089">
    <property type="glycosylation" value="2 sites, 2 N-linked glycans (2 sites)"/>
</dbReference>
<dbReference type="PhosphoSitePlus" id="P15089"/>
<dbReference type="PaxDb" id="10090-ENSMUSP00000001921"/>
<dbReference type="PeptideAtlas" id="P15089"/>
<dbReference type="ProteomicsDB" id="265680"/>
<dbReference type="Antibodypedia" id="1510">
    <property type="antibodies" value="196 antibodies from 26 providers"/>
</dbReference>
<dbReference type="DNASU" id="12873"/>
<dbReference type="Ensembl" id="ENSMUST00000001921.3">
    <property type="protein sequence ID" value="ENSMUSP00000001921.2"/>
    <property type="gene ID" value="ENSMUSG00000001865.3"/>
</dbReference>
<dbReference type="GeneID" id="12873"/>
<dbReference type="KEGG" id="mmu:12873"/>
<dbReference type="UCSC" id="uc008osp.2">
    <property type="organism name" value="mouse"/>
</dbReference>
<dbReference type="AGR" id="MGI:88479"/>
<dbReference type="CTD" id="1359"/>
<dbReference type="MGI" id="MGI:88479">
    <property type="gene designation" value="Cpa3"/>
</dbReference>
<dbReference type="VEuPathDB" id="HostDB:ENSMUSG00000001865"/>
<dbReference type="eggNOG" id="KOG2650">
    <property type="taxonomic scope" value="Eukaryota"/>
</dbReference>
<dbReference type="GeneTree" id="ENSGT00940000161551"/>
<dbReference type="HOGENOM" id="CLU_019326_0_0_1"/>
<dbReference type="InParanoid" id="P15089"/>
<dbReference type="OMA" id="PPNHKDL"/>
<dbReference type="OrthoDB" id="3626597at2759"/>
<dbReference type="PhylomeDB" id="P15089"/>
<dbReference type="TreeFam" id="TF317197"/>
<dbReference type="Reactome" id="R-MMU-2022377">
    <property type="pathway name" value="Metabolism of Angiotensinogen to Angiotensins"/>
</dbReference>
<dbReference type="BioGRID-ORCS" id="12873">
    <property type="hits" value="0 hits in 78 CRISPR screens"/>
</dbReference>
<dbReference type="PRO" id="PR:P15089"/>
<dbReference type="Proteomes" id="UP000000589">
    <property type="component" value="Chromosome 3"/>
</dbReference>
<dbReference type="RNAct" id="P15089">
    <property type="molecule type" value="protein"/>
</dbReference>
<dbReference type="Bgee" id="ENSMUSG00000001865">
    <property type="expression patterns" value="Expressed in dermis and 106 other cell types or tissues"/>
</dbReference>
<dbReference type="ExpressionAtlas" id="P15089">
    <property type="expression patterns" value="baseline and differential"/>
</dbReference>
<dbReference type="GO" id="GO:0005576">
    <property type="term" value="C:extracellular region"/>
    <property type="evidence" value="ECO:0000314"/>
    <property type="project" value="MGI"/>
</dbReference>
<dbReference type="GO" id="GO:0030133">
    <property type="term" value="C:transport vesicle"/>
    <property type="evidence" value="ECO:0007669"/>
    <property type="project" value="UniProtKB-SubCell"/>
</dbReference>
<dbReference type="GO" id="GO:0004181">
    <property type="term" value="F:metallocarboxypeptidase activity"/>
    <property type="evidence" value="ECO:0000315"/>
    <property type="project" value="MGI"/>
</dbReference>
<dbReference type="GO" id="GO:0008233">
    <property type="term" value="F:peptidase activity"/>
    <property type="evidence" value="ECO:0000314"/>
    <property type="project" value="MGI"/>
</dbReference>
<dbReference type="GO" id="GO:0008270">
    <property type="term" value="F:zinc ion binding"/>
    <property type="evidence" value="ECO:0007669"/>
    <property type="project" value="InterPro"/>
</dbReference>
<dbReference type="GO" id="GO:0002003">
    <property type="term" value="P:angiotensin maturation"/>
    <property type="evidence" value="ECO:0000315"/>
    <property type="project" value="MGI"/>
</dbReference>
<dbReference type="GO" id="GO:0002002">
    <property type="term" value="P:regulation of angiotensin levels in blood"/>
    <property type="evidence" value="ECO:0000316"/>
    <property type="project" value="MGI"/>
</dbReference>
<dbReference type="FunFam" id="3.30.70.340:FF:000002">
    <property type="entry name" value="Carboxypeptidase A"/>
    <property type="match status" value="1"/>
</dbReference>
<dbReference type="FunFam" id="3.40.630.10:FF:000001">
    <property type="entry name" value="Carboxypeptidase B"/>
    <property type="match status" value="1"/>
</dbReference>
<dbReference type="Gene3D" id="3.30.70.340">
    <property type="entry name" value="Metallocarboxypeptidase-like"/>
    <property type="match status" value="1"/>
</dbReference>
<dbReference type="Gene3D" id="3.40.630.10">
    <property type="entry name" value="Zn peptidases"/>
    <property type="match status" value="1"/>
</dbReference>
<dbReference type="InterPro" id="IPR036990">
    <property type="entry name" value="M14A-like_propep"/>
</dbReference>
<dbReference type="InterPro" id="IPR003146">
    <property type="entry name" value="M14A_act_pep"/>
</dbReference>
<dbReference type="InterPro" id="IPR000834">
    <property type="entry name" value="Peptidase_M14"/>
</dbReference>
<dbReference type="PANTHER" id="PTHR11705:SF65">
    <property type="entry name" value="MAST CELL CARBOXYPEPTIDASE A"/>
    <property type="match status" value="1"/>
</dbReference>
<dbReference type="PANTHER" id="PTHR11705">
    <property type="entry name" value="PROTEASE FAMILY M14 CARBOXYPEPTIDASE A,B"/>
    <property type="match status" value="1"/>
</dbReference>
<dbReference type="Pfam" id="PF00246">
    <property type="entry name" value="Peptidase_M14"/>
    <property type="match status" value="1"/>
</dbReference>
<dbReference type="Pfam" id="PF02244">
    <property type="entry name" value="Propep_M14"/>
    <property type="match status" value="1"/>
</dbReference>
<dbReference type="PRINTS" id="PR00765">
    <property type="entry name" value="CRBOXYPTASEA"/>
</dbReference>
<dbReference type="SMART" id="SM00631">
    <property type="entry name" value="Zn_pept"/>
    <property type="match status" value="1"/>
</dbReference>
<dbReference type="SUPFAM" id="SSF54897">
    <property type="entry name" value="Protease propeptides/inhibitors"/>
    <property type="match status" value="1"/>
</dbReference>
<dbReference type="SUPFAM" id="SSF53187">
    <property type="entry name" value="Zn-dependent exopeptidases"/>
    <property type="match status" value="1"/>
</dbReference>
<dbReference type="PROSITE" id="PS00132">
    <property type="entry name" value="CARBOXYPEPT_ZN_1"/>
    <property type="match status" value="1"/>
</dbReference>
<dbReference type="PROSITE" id="PS00133">
    <property type="entry name" value="CARBOXYPEPT_ZN_2"/>
    <property type="match status" value="1"/>
</dbReference>
<dbReference type="PROSITE" id="PS52035">
    <property type="entry name" value="PEPTIDASE_M14"/>
    <property type="match status" value="1"/>
</dbReference>
<gene>
    <name type="primary">Cpa3</name>
</gene>
<protein>
    <recommendedName>
        <fullName>Mast cell carboxypeptidase A</fullName>
        <shortName>MC-CPA</shortName>
        <ecNumber>3.4.17.1</ecNumber>
    </recommendedName>
    <alternativeName>
        <fullName>Carboxypeptidase A3</fullName>
    </alternativeName>
</protein>